<proteinExistence type="inferred from homology"/>
<feature type="chain" id="PRO_0000379160" description="ATP-dependent helicase/deoxyribonuclease subunit B">
    <location>
        <begin position="1"/>
        <end position="1171"/>
    </location>
</feature>
<feature type="domain" description="UvrD-like helicase ATP-binding" evidence="1">
    <location>
        <begin position="1"/>
        <end position="390"/>
    </location>
</feature>
<feature type="domain" description="UvrD-like helicase C-terminal" evidence="1">
    <location>
        <begin position="281"/>
        <end position="587"/>
    </location>
</feature>
<feature type="binding site" evidence="1">
    <location>
        <begin position="8"/>
        <end position="15"/>
    </location>
    <ligand>
        <name>ATP</name>
        <dbReference type="ChEBI" id="CHEBI:30616"/>
    </ligand>
</feature>
<feature type="binding site" evidence="1">
    <location>
        <position position="805"/>
    </location>
    <ligand>
        <name>[4Fe-4S] cluster</name>
        <dbReference type="ChEBI" id="CHEBI:49883"/>
    </ligand>
</feature>
<feature type="binding site" evidence="1">
    <location>
        <position position="1129"/>
    </location>
    <ligand>
        <name>[4Fe-4S] cluster</name>
        <dbReference type="ChEBI" id="CHEBI:49883"/>
    </ligand>
</feature>
<feature type="binding site" evidence="1">
    <location>
        <position position="1132"/>
    </location>
    <ligand>
        <name>[4Fe-4S] cluster</name>
        <dbReference type="ChEBI" id="CHEBI:49883"/>
    </ligand>
</feature>
<feature type="binding site" evidence="1">
    <location>
        <position position="1138"/>
    </location>
    <ligand>
        <name>[4Fe-4S] cluster</name>
        <dbReference type="ChEBI" id="CHEBI:49883"/>
    </ligand>
</feature>
<protein>
    <recommendedName>
        <fullName evidence="1">ATP-dependent helicase/deoxyribonuclease subunit B</fullName>
        <ecNumber evidence="1">3.1.-.-</ecNumber>
    </recommendedName>
    <alternativeName>
        <fullName evidence="1">ATP-dependent helicase/nuclease subunit AddB</fullName>
    </alternativeName>
</protein>
<dbReference type="EC" id="3.1.-.-" evidence="1"/>
<dbReference type="EMBL" id="CP000001">
    <property type="protein sequence ID" value="AAU19209.1"/>
    <property type="molecule type" value="Genomic_DNA"/>
</dbReference>
<dbReference type="RefSeq" id="WP_000058552.1">
    <property type="nucleotide sequence ID" value="NC_006274.1"/>
</dbReference>
<dbReference type="SMR" id="Q63EM3"/>
<dbReference type="KEGG" id="bcz:BCE33L1038"/>
<dbReference type="PATRIC" id="fig|288681.22.peg.4528"/>
<dbReference type="Proteomes" id="UP000002612">
    <property type="component" value="Chromosome"/>
</dbReference>
<dbReference type="GO" id="GO:0051539">
    <property type="term" value="F:4 iron, 4 sulfur cluster binding"/>
    <property type="evidence" value="ECO:0007669"/>
    <property type="project" value="UniProtKB-KW"/>
</dbReference>
<dbReference type="GO" id="GO:0008409">
    <property type="term" value="F:5'-3' exonuclease activity"/>
    <property type="evidence" value="ECO:0007669"/>
    <property type="project" value="UniProtKB-UniRule"/>
</dbReference>
<dbReference type="GO" id="GO:0005524">
    <property type="term" value="F:ATP binding"/>
    <property type="evidence" value="ECO:0007669"/>
    <property type="project" value="UniProtKB-UniRule"/>
</dbReference>
<dbReference type="GO" id="GO:0003690">
    <property type="term" value="F:double-stranded DNA binding"/>
    <property type="evidence" value="ECO:0007669"/>
    <property type="project" value="UniProtKB-UniRule"/>
</dbReference>
<dbReference type="GO" id="GO:0004386">
    <property type="term" value="F:helicase activity"/>
    <property type="evidence" value="ECO:0007669"/>
    <property type="project" value="UniProtKB-KW"/>
</dbReference>
<dbReference type="GO" id="GO:0046872">
    <property type="term" value="F:metal ion binding"/>
    <property type="evidence" value="ECO:0007669"/>
    <property type="project" value="UniProtKB-KW"/>
</dbReference>
<dbReference type="GO" id="GO:0000724">
    <property type="term" value="P:double-strand break repair via homologous recombination"/>
    <property type="evidence" value="ECO:0007669"/>
    <property type="project" value="UniProtKB-UniRule"/>
</dbReference>
<dbReference type="FunFam" id="3.40.50.300:FF:001679">
    <property type="entry name" value="ATP-dependent helicase/deoxyribonuclease subunit B"/>
    <property type="match status" value="1"/>
</dbReference>
<dbReference type="FunFam" id="3.40.50.300:FF:001704">
    <property type="entry name" value="ATP-dependent helicase/deoxyribonuclease subunit B"/>
    <property type="match status" value="1"/>
</dbReference>
<dbReference type="FunFam" id="3.40.50.300:FF:001705">
    <property type="entry name" value="ATP-dependent helicase/deoxyribonuclease subunit B"/>
    <property type="match status" value="1"/>
</dbReference>
<dbReference type="FunFam" id="3.40.50.300:FF:001739">
    <property type="entry name" value="ATP-dependent helicase/deoxyribonuclease subunit B"/>
    <property type="match status" value="1"/>
</dbReference>
<dbReference type="FunFam" id="3.90.320.10:FF:000006">
    <property type="entry name" value="ATP-dependent helicase/deoxyribonuclease subunit B"/>
    <property type="match status" value="1"/>
</dbReference>
<dbReference type="Gene3D" id="3.90.320.10">
    <property type="match status" value="1"/>
</dbReference>
<dbReference type="Gene3D" id="6.10.140.1030">
    <property type="match status" value="1"/>
</dbReference>
<dbReference type="Gene3D" id="3.40.50.300">
    <property type="entry name" value="P-loop containing nucleotide triphosphate hydrolases"/>
    <property type="match status" value="4"/>
</dbReference>
<dbReference type="HAMAP" id="MF_01452">
    <property type="entry name" value="AddB_type1"/>
    <property type="match status" value="1"/>
</dbReference>
<dbReference type="InterPro" id="IPR049035">
    <property type="entry name" value="ADDB_N"/>
</dbReference>
<dbReference type="InterPro" id="IPR014140">
    <property type="entry name" value="DNA_helicase_suAddB"/>
</dbReference>
<dbReference type="InterPro" id="IPR014017">
    <property type="entry name" value="DNA_helicase_UvrD-like_C"/>
</dbReference>
<dbReference type="InterPro" id="IPR027417">
    <property type="entry name" value="P-loop_NTPase"/>
</dbReference>
<dbReference type="InterPro" id="IPR011604">
    <property type="entry name" value="PDDEXK-like_dom_sf"/>
</dbReference>
<dbReference type="InterPro" id="IPR038726">
    <property type="entry name" value="PDDEXK_AddAB-type"/>
</dbReference>
<dbReference type="NCBIfam" id="TIGR02773">
    <property type="entry name" value="addB_Gpos"/>
    <property type="match status" value="1"/>
</dbReference>
<dbReference type="PANTHER" id="PTHR30591">
    <property type="entry name" value="RECBCD ENZYME SUBUNIT RECC"/>
    <property type="match status" value="1"/>
</dbReference>
<dbReference type="PANTHER" id="PTHR30591:SF1">
    <property type="entry name" value="RECBCD ENZYME SUBUNIT RECC"/>
    <property type="match status" value="1"/>
</dbReference>
<dbReference type="Pfam" id="PF21445">
    <property type="entry name" value="ADDB_N"/>
    <property type="match status" value="1"/>
</dbReference>
<dbReference type="Pfam" id="PF12705">
    <property type="entry name" value="PDDEXK_1"/>
    <property type="match status" value="1"/>
</dbReference>
<dbReference type="Pfam" id="PF13361">
    <property type="entry name" value="UvrD_C"/>
    <property type="match status" value="1"/>
</dbReference>
<dbReference type="SUPFAM" id="SSF52540">
    <property type="entry name" value="P-loop containing nucleoside triphosphate hydrolases"/>
    <property type="match status" value="2"/>
</dbReference>
<dbReference type="PROSITE" id="PS51198">
    <property type="entry name" value="UVRD_HELICASE_ATP_BIND"/>
    <property type="match status" value="1"/>
</dbReference>
<dbReference type="PROSITE" id="PS51217">
    <property type="entry name" value="UVRD_HELICASE_CTER"/>
    <property type="match status" value="1"/>
</dbReference>
<name>ADDB_BACCZ</name>
<reference key="1">
    <citation type="journal article" date="2006" name="J. Bacteriol.">
        <title>Pathogenomic sequence analysis of Bacillus cereus and Bacillus thuringiensis isolates closely related to Bacillus anthracis.</title>
        <authorList>
            <person name="Han C.S."/>
            <person name="Xie G."/>
            <person name="Challacombe J.F."/>
            <person name="Altherr M.R."/>
            <person name="Bhotika S.S."/>
            <person name="Bruce D."/>
            <person name="Campbell C.S."/>
            <person name="Campbell M.L."/>
            <person name="Chen J."/>
            <person name="Chertkov O."/>
            <person name="Cleland C."/>
            <person name="Dimitrijevic M."/>
            <person name="Doggett N.A."/>
            <person name="Fawcett J.J."/>
            <person name="Glavina T."/>
            <person name="Goodwin L.A."/>
            <person name="Hill K.K."/>
            <person name="Hitchcock P."/>
            <person name="Jackson P.J."/>
            <person name="Keim P."/>
            <person name="Kewalramani A.R."/>
            <person name="Longmire J."/>
            <person name="Lucas S."/>
            <person name="Malfatti S."/>
            <person name="McMurry K."/>
            <person name="Meincke L.J."/>
            <person name="Misra M."/>
            <person name="Moseman B.L."/>
            <person name="Mundt M."/>
            <person name="Munk A.C."/>
            <person name="Okinaka R.T."/>
            <person name="Parson-Quintana B."/>
            <person name="Reilly L.P."/>
            <person name="Richardson P."/>
            <person name="Robinson D.L."/>
            <person name="Rubin E."/>
            <person name="Saunders E."/>
            <person name="Tapia R."/>
            <person name="Tesmer J.G."/>
            <person name="Thayer N."/>
            <person name="Thompson L.S."/>
            <person name="Tice H."/>
            <person name="Ticknor L.O."/>
            <person name="Wills P.L."/>
            <person name="Brettin T.S."/>
            <person name="Gilna P."/>
        </authorList>
    </citation>
    <scope>NUCLEOTIDE SEQUENCE [LARGE SCALE GENOMIC DNA]</scope>
    <source>
        <strain>ZK / E33L</strain>
    </source>
</reference>
<keyword id="KW-0004">4Fe-4S</keyword>
<keyword id="KW-0067">ATP-binding</keyword>
<keyword id="KW-0227">DNA damage</keyword>
<keyword id="KW-0234">DNA repair</keyword>
<keyword id="KW-0238">DNA-binding</keyword>
<keyword id="KW-0269">Exonuclease</keyword>
<keyword id="KW-0347">Helicase</keyword>
<keyword id="KW-0378">Hydrolase</keyword>
<keyword id="KW-0408">Iron</keyword>
<keyword id="KW-0411">Iron-sulfur</keyword>
<keyword id="KW-0479">Metal-binding</keyword>
<keyword id="KW-0540">Nuclease</keyword>
<keyword id="KW-0547">Nucleotide-binding</keyword>
<gene>
    <name evidence="1" type="primary">addB</name>
    <name type="ordered locus">BCE33L1038</name>
</gene>
<organism>
    <name type="scientific">Bacillus cereus (strain ZK / E33L)</name>
    <dbReference type="NCBI Taxonomy" id="288681"/>
    <lineage>
        <taxon>Bacteria</taxon>
        <taxon>Bacillati</taxon>
        <taxon>Bacillota</taxon>
        <taxon>Bacilli</taxon>
        <taxon>Bacillales</taxon>
        <taxon>Bacillaceae</taxon>
        <taxon>Bacillus</taxon>
        <taxon>Bacillus cereus group</taxon>
    </lineage>
</organism>
<sequence>MSLRFVIGRAGSGKSTLCLHEVQEELKQRPRGETILYLVPEQMTFQTQQALIGSEDVRGSIRAQVFSFSRLAWKVLQEVGGASRLHIDEAGVHMLLRKIVESRKDGLSVFQKAAEQNGFFEHLGSMIAEFKRYNVTPSNVYEMWQQLDAHSSSAEQKLLANKVYDLQLLYDDFERALIGKYLDSEDYLQLLVEKLPQSEYVKGAEIYIDGFHSFSPQELEIVRQLMICGARVTITLTIDEKTLAQPVNELDLFYETTLTYEKIKQVAREEKIEIEKTIPLMEQPRFHSPALAHLEKHYEARPNEKFHGEASVTIRTAANLRAEVEGVAREIRRLVADEDYRYRDIAVLLRNGESYYDVMRTLFTDYNIPHFIDEKRPMSHHPLVECIRSALEIISGNWRYDAVFRCVKTELLYPLDVRKETMREEMDEFENYCLAYGVQGKRWTSEDPWMYRRYRSLDDTNGMITDSEREMEEKINRLRDVVRTPVIRMQKRLKRAGTVMQMCEAVYLFLEELDVPKKLEALRIRAEESGDFLFATDHEQVWEEVMSLLDTFVEMLGEEKMSLSMFTDVMSTGLEALQFANIPPSLDQVLIANIDRSRLSNVKATFVIGVNEGVIPAAPMDEGMLSDEERDVLSAAGIELAPTTRQTLLEEQFVMYQMVTRATEKLYISCPLADEEGKTLLASSFIKKIKRMFPDVKDTFITNDVNDLSRSEQILYVATPEVTLSYVMQQLQTWKRYGFEGNLDFWWDVYNFYVTSDEWKQKSSRVLSSLFYRNRAQKLSTAVSRDLYGDKIKGSVSRMELFNRCAYAHFAQHGLSLRERDIFKLDAPDIGELFHAALKRIADRLLRENRTWADLSIKECEHLSTVVIEEIAPLLQRQILLSSNRHFYLKQKLQQIIFRTSIILREHAKSSGFVPVDLEVPFGMGGTGSLPPMEFSLPNGVKMEVVGRIDRVDKAEDENGTFLRIIDYKSSSKALDLTEVYYGLALQMLTYLDVVTSNAHTWMKKGHAASPAGVLYFHIHNPIVEVKGDASEAEIEKEILKKFKMKGLVLGDADVVRLMDNKLSTGSSDIISAGLKKDGSFSARSSIASEQEFNVLQKYVHHTFENIGKDITEGVIDIAPYKKGNKAACTFCNFKSVCQFDESLEDNQFRTLKDMKDSEAMEKIREEVGGE</sequence>
<comment type="function">
    <text evidence="1">The heterodimer acts as both an ATP-dependent DNA helicase and an ATP-dependent, dual-direction single-stranded exonuclease. Recognizes the chi site generating a DNA molecule suitable for the initiation of homologous recombination. The AddB subunit has 5' -&gt; 3' nuclease activity but not helicase activity.</text>
</comment>
<comment type="cofactor">
    <cofactor evidence="1">
        <name>Mg(2+)</name>
        <dbReference type="ChEBI" id="CHEBI:18420"/>
    </cofactor>
</comment>
<comment type="cofactor">
    <cofactor evidence="1">
        <name>[4Fe-4S] cluster</name>
        <dbReference type="ChEBI" id="CHEBI:49883"/>
    </cofactor>
    <text evidence="1">Binds 1 [4Fe-4S] cluster.</text>
</comment>
<comment type="subunit">
    <text evidence="1">Heterodimer of AddA and AddB.</text>
</comment>
<comment type="miscellaneous">
    <text evidence="1">Despite having conserved helicase domains, this subunit does not have helicase activity.</text>
</comment>
<comment type="similarity">
    <text evidence="1">Belongs to the helicase family. AddB/RexB type 1 subfamily.</text>
</comment>
<evidence type="ECO:0000255" key="1">
    <source>
        <dbReference type="HAMAP-Rule" id="MF_01452"/>
    </source>
</evidence>
<accession>Q63EM3</accession>